<protein>
    <recommendedName>
        <fullName evidence="1 3">4-hydroxybenzoate solanesyltransferase</fullName>
        <ecNumber evidence="1 4">2.5.1.39</ecNumber>
    </recommendedName>
    <alternativeName>
        <fullName evidence="1">4-HB polyprenyltransferase</fullName>
    </alternativeName>
</protein>
<organism>
    <name type="scientific">Synechocystis sp. (strain ATCC 27184 / PCC 6803 / Kazusa)</name>
    <dbReference type="NCBI Taxonomy" id="1111708"/>
    <lineage>
        <taxon>Bacteria</taxon>
        <taxon>Bacillati</taxon>
        <taxon>Cyanobacteriota</taxon>
        <taxon>Cyanophyceae</taxon>
        <taxon>Synechococcales</taxon>
        <taxon>Merismopediaceae</taxon>
        <taxon>Synechocystis</taxon>
    </lineage>
</organism>
<dbReference type="EC" id="2.5.1.39" evidence="1 4"/>
<dbReference type="EMBL" id="BA000022">
    <property type="protein sequence ID" value="BAA10850.1"/>
    <property type="molecule type" value="Genomic_DNA"/>
</dbReference>
<dbReference type="PIR" id="S76003">
    <property type="entry name" value="S76003"/>
</dbReference>
<dbReference type="SMR" id="Q55500"/>
<dbReference type="STRING" id="1148.gene:10500356"/>
<dbReference type="PaxDb" id="1148-1001363"/>
<dbReference type="EnsemblBacteria" id="BAA10850">
    <property type="protein sequence ID" value="BAA10850"/>
    <property type="gene ID" value="BAA10850"/>
</dbReference>
<dbReference type="KEGG" id="syn:slr0926"/>
<dbReference type="eggNOG" id="COG0382">
    <property type="taxonomic scope" value="Bacteria"/>
</dbReference>
<dbReference type="InParanoid" id="Q55500"/>
<dbReference type="PhylomeDB" id="Q55500"/>
<dbReference type="BioCyc" id="MetaCyc:MONOMER-17095"/>
<dbReference type="Proteomes" id="UP000001425">
    <property type="component" value="Chromosome"/>
</dbReference>
<dbReference type="GO" id="GO:0005886">
    <property type="term" value="C:plasma membrane"/>
    <property type="evidence" value="ECO:0007669"/>
    <property type="project" value="UniProtKB-SubCell"/>
</dbReference>
<dbReference type="GO" id="GO:0008412">
    <property type="term" value="F:4-hydroxybenzoate polyprenyltransferase activity"/>
    <property type="evidence" value="ECO:0007669"/>
    <property type="project" value="UniProtKB-EC"/>
</dbReference>
<dbReference type="GO" id="GO:0008495">
    <property type="term" value="F:protoheme IX farnesyltransferase activity"/>
    <property type="evidence" value="ECO:0000318"/>
    <property type="project" value="GO_Central"/>
</dbReference>
<dbReference type="GO" id="GO:0006783">
    <property type="term" value="P:heme biosynthetic process"/>
    <property type="evidence" value="ECO:0000318"/>
    <property type="project" value="GO_Central"/>
</dbReference>
<dbReference type="CDD" id="cd13959">
    <property type="entry name" value="PT_UbiA_COQ2"/>
    <property type="match status" value="1"/>
</dbReference>
<dbReference type="FunFam" id="1.10.357.140:FF:000008">
    <property type="entry name" value="4-hydroxybenzoate octaprenyltransferase"/>
    <property type="match status" value="1"/>
</dbReference>
<dbReference type="FunFam" id="1.20.120.1780:FF:000001">
    <property type="entry name" value="4-hydroxybenzoate octaprenyltransferase"/>
    <property type="match status" value="1"/>
</dbReference>
<dbReference type="Gene3D" id="1.10.357.140">
    <property type="entry name" value="UbiA prenyltransferase"/>
    <property type="match status" value="1"/>
</dbReference>
<dbReference type="Gene3D" id="1.20.120.1780">
    <property type="entry name" value="UbiA prenyltransferase"/>
    <property type="match status" value="1"/>
</dbReference>
<dbReference type="HAMAP" id="MF_01635">
    <property type="entry name" value="UbiA"/>
    <property type="match status" value="1"/>
</dbReference>
<dbReference type="InterPro" id="IPR006370">
    <property type="entry name" value="HB_polyprenyltransferase-like"/>
</dbReference>
<dbReference type="InterPro" id="IPR039653">
    <property type="entry name" value="Prenyltransferase"/>
</dbReference>
<dbReference type="InterPro" id="IPR000537">
    <property type="entry name" value="UbiA_prenyltransferase"/>
</dbReference>
<dbReference type="InterPro" id="IPR030470">
    <property type="entry name" value="UbiA_prenylTrfase_CS"/>
</dbReference>
<dbReference type="InterPro" id="IPR044878">
    <property type="entry name" value="UbiA_sf"/>
</dbReference>
<dbReference type="NCBIfam" id="NF009514">
    <property type="entry name" value="PRK12873.1"/>
    <property type="match status" value="1"/>
</dbReference>
<dbReference type="NCBIfam" id="TIGR01474">
    <property type="entry name" value="ubiA_proteo"/>
    <property type="match status" value="1"/>
</dbReference>
<dbReference type="PANTHER" id="PTHR11048:SF28">
    <property type="entry name" value="4-HYDROXYBENZOATE POLYPRENYLTRANSFERASE, MITOCHONDRIAL"/>
    <property type="match status" value="1"/>
</dbReference>
<dbReference type="PANTHER" id="PTHR11048">
    <property type="entry name" value="PRENYLTRANSFERASES"/>
    <property type="match status" value="1"/>
</dbReference>
<dbReference type="Pfam" id="PF01040">
    <property type="entry name" value="UbiA"/>
    <property type="match status" value="1"/>
</dbReference>
<dbReference type="PROSITE" id="PS00943">
    <property type="entry name" value="UBIA"/>
    <property type="match status" value="1"/>
</dbReference>
<proteinExistence type="evidence at protein level"/>
<sequence>MVAQTPSSPPLWLTIIYLLRWHKPAGRLILMIPALWAVCLAAQGLPPLPLLGTIALGTLATSGLGCVVNDLWDRDIDPQVERTKQRPLAARALSVQVGIGVALVALLCAAGLAFYLTPLSFWLCVAAVPVIVAYPGAKRVFPVPQLVLSIAWGFAVLISWSAVTGDLTDATWVLWGATVFWTLGFDTVYAMADREDDRRIGVNSSALFFGQYVGEAVGIFFALTIGCLFYLGMILMLNPLYWLSLAIAIVGWVIQYIQLSAPTPEPKLYGQIFGQNVIIGFVLLAGMLLGWL</sequence>
<gene>
    <name evidence="1 3" type="primary">plqA</name>
    <name evidence="5" type="ordered locus">slr0926</name>
</gene>
<feature type="chain" id="PRO_0000432822" description="4-hydroxybenzoate solanesyltransferase">
    <location>
        <begin position="1"/>
        <end position="292"/>
    </location>
</feature>
<feature type="transmembrane region" description="Helical" evidence="1">
    <location>
        <begin position="28"/>
        <end position="48"/>
    </location>
</feature>
<feature type="transmembrane region" description="Helical" evidence="1">
    <location>
        <begin position="49"/>
        <end position="69"/>
    </location>
</feature>
<feature type="transmembrane region" description="Helical" evidence="1">
    <location>
        <begin position="97"/>
        <end position="117"/>
    </location>
</feature>
<feature type="transmembrane region" description="Helical" evidence="1">
    <location>
        <begin position="118"/>
        <end position="138"/>
    </location>
</feature>
<feature type="transmembrane region" description="Helical" evidence="1">
    <location>
        <begin position="140"/>
        <end position="160"/>
    </location>
</feature>
<feature type="transmembrane region" description="Helical" evidence="1">
    <location>
        <begin position="172"/>
        <end position="192"/>
    </location>
</feature>
<feature type="transmembrane region" description="Helical" evidence="1">
    <location>
        <begin position="217"/>
        <end position="237"/>
    </location>
</feature>
<feature type="transmembrane region" description="Helical" evidence="1">
    <location>
        <begin position="239"/>
        <end position="259"/>
    </location>
</feature>
<feature type="transmembrane region" description="Helical" evidence="1">
    <location>
        <begin position="272"/>
        <end position="292"/>
    </location>
</feature>
<reference key="1">
    <citation type="journal article" date="1996" name="DNA Res.">
        <title>Sequence analysis of the genome of the unicellular cyanobacterium Synechocystis sp. strain PCC6803. II. Sequence determination of the entire genome and assignment of potential protein-coding regions.</title>
        <authorList>
            <person name="Kaneko T."/>
            <person name="Sato S."/>
            <person name="Kotani H."/>
            <person name="Tanaka A."/>
            <person name="Asamizu E."/>
            <person name="Nakamura Y."/>
            <person name="Miyajima N."/>
            <person name="Hirosawa M."/>
            <person name="Sugiura M."/>
            <person name="Sasamoto S."/>
            <person name="Kimura T."/>
            <person name="Hosouchi T."/>
            <person name="Matsuno A."/>
            <person name="Muraki A."/>
            <person name="Nakazaki N."/>
            <person name="Naruo K."/>
            <person name="Okumura S."/>
            <person name="Shimpo S."/>
            <person name="Takeuchi C."/>
            <person name="Wada T."/>
            <person name="Watanabe A."/>
            <person name="Yamada M."/>
            <person name="Yasuda M."/>
            <person name="Tabata S."/>
        </authorList>
    </citation>
    <scope>NUCLEOTIDE SEQUENCE [LARGE SCALE GENOMIC DNA]</scope>
    <source>
        <strain>ATCC 27184 / PCC 6803 / Kazusa</strain>
    </source>
</reference>
<reference key="2">
    <citation type="journal article" date="2012" name="Biochem. J.">
        <title>Plastoquinone-9 biosynthesis in cyanobacteria differs from that in plants and involves a novel 4-hydroxybenzoate solanesyltransferase.</title>
        <authorList>
            <person name="Sadre R."/>
            <person name="Pfaff C."/>
            <person name="Buchkremer S."/>
        </authorList>
    </citation>
    <scope>FUNCTION</scope>
    <scope>CATALYTIC ACTIVITY</scope>
    <scope>COFACTOR</scope>
    <scope>BIOPHYSICOCHEMICAL PROPERTIES</scope>
    <scope>SUBCELLULAR LOCATION</scope>
</reference>
<comment type="function">
    <text evidence="1 2">Catalyzes the prenylation of para-hydroxybenzoate (PHB) with an all-trans polyprenyl group. Mediates the second step in the final reaction sequence of plastoquinone-9 (PQ-9) biosynthesis, which is the condensation of the polyisoprenoid side chain with PHB, generating the first membrane-bound Q intermediate 4-hydroxy-3-solanesylbenzoate.</text>
</comment>
<comment type="catalytic activity">
    <reaction evidence="1 2">
        <text>all-trans-nonaprenyl diphosphate + 4-hydroxybenzoate = 4-hydroxy-3-(all-trans-nonaprenyl)benzoate + diphosphate</text>
        <dbReference type="Rhea" id="RHEA:17709"/>
        <dbReference type="ChEBI" id="CHEBI:17879"/>
        <dbReference type="ChEBI" id="CHEBI:33019"/>
        <dbReference type="ChEBI" id="CHEBI:58391"/>
        <dbReference type="ChEBI" id="CHEBI:84502"/>
        <dbReference type="EC" id="2.5.1.39"/>
    </reaction>
</comment>
<comment type="cofactor">
    <cofactor evidence="1 2">
        <name>Mg(2+)</name>
        <dbReference type="ChEBI" id="CHEBI:18420"/>
    </cofactor>
</comment>
<comment type="biophysicochemical properties">
    <kinetics>
        <KM evidence="2">4.3 uM for 4-hydroxybenzoate</KM>
        <KM evidence="2">11.8 uM for geranylgeranyl diphosphate</KM>
        <KM evidence="2">18.1 uM for farnesyl diphosphate</KM>
    </kinetics>
</comment>
<comment type="subcellular location">
    <subcellularLocation>
        <location evidence="1 2">Cell inner membrane</location>
        <topology evidence="1">Multi-pass membrane protein</topology>
    </subcellularLocation>
</comment>
<comment type="similarity">
    <text evidence="1">Belongs to the UbiA prenyltransferase family.</text>
</comment>
<evidence type="ECO:0000255" key="1">
    <source>
        <dbReference type="HAMAP-Rule" id="MF_01635"/>
    </source>
</evidence>
<evidence type="ECO:0000269" key="2">
    <source>
    </source>
</evidence>
<evidence type="ECO:0000303" key="3">
    <source>
    </source>
</evidence>
<evidence type="ECO:0000305" key="4">
    <source>
    </source>
</evidence>
<evidence type="ECO:0000312" key="5">
    <source>
        <dbReference type="EMBL" id="BAA10850.1"/>
    </source>
</evidence>
<accession>Q55500</accession>
<name>PLQA_SYNY3</name>
<keyword id="KW-0997">Cell inner membrane</keyword>
<keyword id="KW-1003">Cell membrane</keyword>
<keyword id="KW-0460">Magnesium</keyword>
<keyword id="KW-0472">Membrane</keyword>
<keyword id="KW-1185">Reference proteome</keyword>
<keyword id="KW-0808">Transferase</keyword>
<keyword id="KW-0812">Transmembrane</keyword>
<keyword id="KW-1133">Transmembrane helix</keyword>